<proteinExistence type="inferred from homology"/>
<sequence>MPELPEVETVRRGLQPFMEGATVVRVEQNRPDLRFAFPENFAERLSGRRIEALGRRAKYLTVHLDDGLSIISHLGMSGSFRIEAEDAQGLPGGFHHERSKNSLHDHVVFHLMRSDGASARIIYNDPRRFGFMLFAEKGALEEHPLLKDLGVEPTGNLLSGEVLAALFKGRRTPLKAALLDQRLIAGLGNIYVCEALWRAGLSPMRAAGSVAGEMDVMERLAGAIRSVIAQAIAAGGSSLKDYIQADGALGYFQHSFSVYGREGKPCRNPACGGTVERVVQSGRSTFFCASCQT</sequence>
<comment type="function">
    <text evidence="2">Involved in base excision repair of DNA damaged by oxidation or by mutagenic agents. Acts as a DNA glycosylase that recognizes and removes damaged bases. Has a preference for oxidized purines, such as 7,8-dihydro-8-oxoguanine (8-oxoG). Has AP (apurinic/apyrimidinic) lyase activity and introduces nicks in the DNA strand. Cleaves the DNA backbone by beta-delta elimination to generate a single-strand break at the site of the removed base with both 3'- and 5'-phosphates.</text>
</comment>
<comment type="catalytic activity">
    <reaction evidence="2">
        <text>Hydrolysis of DNA containing ring-opened 7-methylguanine residues, releasing 2,6-diamino-4-hydroxy-5-(N-methyl)formamidopyrimidine.</text>
        <dbReference type="EC" id="3.2.2.23"/>
    </reaction>
</comment>
<comment type="catalytic activity">
    <reaction evidence="2">
        <text>2'-deoxyribonucleotide-(2'-deoxyribose 5'-phosphate)-2'-deoxyribonucleotide-DNA = a 3'-end 2'-deoxyribonucleotide-(2,3-dehydro-2,3-deoxyribose 5'-phosphate)-DNA + a 5'-end 5'-phospho-2'-deoxyribonucleoside-DNA + H(+)</text>
        <dbReference type="Rhea" id="RHEA:66592"/>
        <dbReference type="Rhea" id="RHEA-COMP:13180"/>
        <dbReference type="Rhea" id="RHEA-COMP:16897"/>
        <dbReference type="Rhea" id="RHEA-COMP:17067"/>
        <dbReference type="ChEBI" id="CHEBI:15378"/>
        <dbReference type="ChEBI" id="CHEBI:136412"/>
        <dbReference type="ChEBI" id="CHEBI:157695"/>
        <dbReference type="ChEBI" id="CHEBI:167181"/>
        <dbReference type="EC" id="4.2.99.18"/>
    </reaction>
</comment>
<comment type="cofactor">
    <cofactor evidence="2">
        <name>Zn(2+)</name>
        <dbReference type="ChEBI" id="CHEBI:29105"/>
    </cofactor>
    <text evidence="2">Binds 1 zinc ion per subunit.</text>
</comment>
<comment type="subunit">
    <text evidence="2">Monomer.</text>
</comment>
<comment type="similarity">
    <text evidence="2">Belongs to the FPG family.</text>
</comment>
<reference key="1">
    <citation type="journal article" date="2009" name="PLoS ONE">
        <title>Genome degradation in Brucella ovis corresponds with narrowing of its host range and tissue tropism.</title>
        <authorList>
            <person name="Tsolis R.M."/>
            <person name="Seshadri R."/>
            <person name="Santos R.L."/>
            <person name="Sangari F.J."/>
            <person name="Lobo J.M."/>
            <person name="de Jong M.F."/>
            <person name="Ren Q."/>
            <person name="Myers G."/>
            <person name="Brinkac L.M."/>
            <person name="Nelson W.C."/>
            <person name="Deboy R.T."/>
            <person name="Angiuoli S."/>
            <person name="Khouri H."/>
            <person name="Dimitrov G."/>
            <person name="Robinson J.R."/>
            <person name="Mulligan S."/>
            <person name="Walker R.L."/>
            <person name="Elzer P.E."/>
            <person name="Hassan K.A."/>
            <person name="Paulsen I.T."/>
        </authorList>
    </citation>
    <scope>NUCLEOTIDE SEQUENCE [LARGE SCALE GENOMIC DNA]</scope>
    <source>
        <strain>ATCC 25840 / 63/290 / NCTC 10512</strain>
    </source>
</reference>
<accession>A5VTD0</accession>
<gene>
    <name evidence="2" type="primary">mutM</name>
    <name evidence="2" type="synonym">fpg</name>
    <name type="ordered locus">BOV_2096</name>
</gene>
<protein>
    <recommendedName>
        <fullName evidence="2">Formamidopyrimidine-DNA glycosylase</fullName>
        <shortName evidence="2">Fapy-DNA glycosylase</shortName>
        <ecNumber evidence="2">3.2.2.23</ecNumber>
    </recommendedName>
    <alternativeName>
        <fullName evidence="2">DNA-(apurinic or apyrimidinic site) lyase MutM</fullName>
        <shortName evidence="2">AP lyase MutM</shortName>
        <ecNumber evidence="2">4.2.99.18</ecNumber>
    </alternativeName>
</protein>
<feature type="initiator methionine" description="Removed" evidence="1">
    <location>
        <position position="1"/>
    </location>
</feature>
<feature type="chain" id="PRO_1000008680" description="Formamidopyrimidine-DNA glycosylase">
    <location>
        <begin position="2"/>
        <end position="293"/>
    </location>
</feature>
<feature type="zinc finger region" description="FPG-type" evidence="2">
    <location>
        <begin position="257"/>
        <end position="293"/>
    </location>
</feature>
<feature type="active site" description="Schiff-base intermediate with DNA" evidence="2">
    <location>
        <position position="2"/>
    </location>
</feature>
<feature type="active site" description="Proton donor" evidence="2">
    <location>
        <position position="3"/>
    </location>
</feature>
<feature type="active site" description="Proton donor; for beta-elimination activity" evidence="2">
    <location>
        <position position="58"/>
    </location>
</feature>
<feature type="active site" description="Proton donor; for delta-elimination activity" evidence="2">
    <location>
        <position position="283"/>
    </location>
</feature>
<feature type="binding site" evidence="2">
    <location>
        <position position="104"/>
    </location>
    <ligand>
        <name>DNA</name>
        <dbReference type="ChEBI" id="CHEBI:16991"/>
    </ligand>
</feature>
<feature type="binding site" evidence="2">
    <location>
        <position position="127"/>
    </location>
    <ligand>
        <name>DNA</name>
        <dbReference type="ChEBI" id="CHEBI:16991"/>
    </ligand>
</feature>
<feature type="binding site" evidence="2">
    <location>
        <position position="170"/>
    </location>
    <ligand>
        <name>DNA</name>
        <dbReference type="ChEBI" id="CHEBI:16991"/>
    </ligand>
</feature>
<keyword id="KW-0227">DNA damage</keyword>
<keyword id="KW-0234">DNA repair</keyword>
<keyword id="KW-0238">DNA-binding</keyword>
<keyword id="KW-0326">Glycosidase</keyword>
<keyword id="KW-0378">Hydrolase</keyword>
<keyword id="KW-0456">Lyase</keyword>
<keyword id="KW-0479">Metal-binding</keyword>
<keyword id="KW-0511">Multifunctional enzyme</keyword>
<keyword id="KW-0862">Zinc</keyword>
<keyword id="KW-0863">Zinc-finger</keyword>
<evidence type="ECO:0000250" key="1"/>
<evidence type="ECO:0000255" key="2">
    <source>
        <dbReference type="HAMAP-Rule" id="MF_00103"/>
    </source>
</evidence>
<organism>
    <name type="scientific">Brucella ovis (strain ATCC 25840 / 63/290 / NCTC 10512)</name>
    <dbReference type="NCBI Taxonomy" id="444178"/>
    <lineage>
        <taxon>Bacteria</taxon>
        <taxon>Pseudomonadati</taxon>
        <taxon>Pseudomonadota</taxon>
        <taxon>Alphaproteobacteria</taxon>
        <taxon>Hyphomicrobiales</taxon>
        <taxon>Brucellaceae</taxon>
        <taxon>Brucella/Ochrobactrum group</taxon>
        <taxon>Brucella</taxon>
    </lineage>
</organism>
<name>FPG_BRUO2</name>
<dbReference type="EC" id="3.2.2.23" evidence="2"/>
<dbReference type="EC" id="4.2.99.18" evidence="2"/>
<dbReference type="EMBL" id="CP000708">
    <property type="protein sequence ID" value="ABQ60389.1"/>
    <property type="molecule type" value="Genomic_DNA"/>
</dbReference>
<dbReference type="RefSeq" id="WP_006014625.1">
    <property type="nucleotide sequence ID" value="NC_009505.1"/>
</dbReference>
<dbReference type="SMR" id="A5VTD0"/>
<dbReference type="GeneID" id="45125426"/>
<dbReference type="KEGG" id="bov:BOV_2096"/>
<dbReference type="HOGENOM" id="CLU_038423_1_1_5"/>
<dbReference type="PhylomeDB" id="A5VTD0"/>
<dbReference type="PRO" id="PR:A5VTD0"/>
<dbReference type="Proteomes" id="UP000006383">
    <property type="component" value="Chromosome I"/>
</dbReference>
<dbReference type="GO" id="GO:0034039">
    <property type="term" value="F:8-oxo-7,8-dihydroguanine DNA N-glycosylase activity"/>
    <property type="evidence" value="ECO:0007669"/>
    <property type="project" value="TreeGrafter"/>
</dbReference>
<dbReference type="GO" id="GO:0140078">
    <property type="term" value="F:class I DNA-(apurinic or apyrimidinic site) endonuclease activity"/>
    <property type="evidence" value="ECO:0007669"/>
    <property type="project" value="UniProtKB-EC"/>
</dbReference>
<dbReference type="GO" id="GO:0003684">
    <property type="term" value="F:damaged DNA binding"/>
    <property type="evidence" value="ECO:0007669"/>
    <property type="project" value="InterPro"/>
</dbReference>
<dbReference type="GO" id="GO:0008270">
    <property type="term" value="F:zinc ion binding"/>
    <property type="evidence" value="ECO:0007669"/>
    <property type="project" value="UniProtKB-UniRule"/>
</dbReference>
<dbReference type="GO" id="GO:0006284">
    <property type="term" value="P:base-excision repair"/>
    <property type="evidence" value="ECO:0007669"/>
    <property type="project" value="InterPro"/>
</dbReference>
<dbReference type="CDD" id="cd08966">
    <property type="entry name" value="EcFpg-like_N"/>
    <property type="match status" value="1"/>
</dbReference>
<dbReference type="FunFam" id="1.10.8.50:FF:000003">
    <property type="entry name" value="Formamidopyrimidine-DNA glycosylase"/>
    <property type="match status" value="1"/>
</dbReference>
<dbReference type="Gene3D" id="1.10.8.50">
    <property type="match status" value="1"/>
</dbReference>
<dbReference type="Gene3D" id="3.20.190.10">
    <property type="entry name" value="MutM-like, N-terminal"/>
    <property type="match status" value="1"/>
</dbReference>
<dbReference type="HAMAP" id="MF_00103">
    <property type="entry name" value="Fapy_DNA_glycosyl"/>
    <property type="match status" value="1"/>
</dbReference>
<dbReference type="InterPro" id="IPR015886">
    <property type="entry name" value="DNA_glyclase/AP_lyase_DNA-bd"/>
</dbReference>
<dbReference type="InterPro" id="IPR015887">
    <property type="entry name" value="DNA_glyclase_Znf_dom_DNA_BS"/>
</dbReference>
<dbReference type="InterPro" id="IPR020629">
    <property type="entry name" value="Formamido-pyr_DNA_Glyclase"/>
</dbReference>
<dbReference type="InterPro" id="IPR012319">
    <property type="entry name" value="FPG_cat"/>
</dbReference>
<dbReference type="InterPro" id="IPR035937">
    <property type="entry name" value="MutM-like_N-ter"/>
</dbReference>
<dbReference type="InterPro" id="IPR010979">
    <property type="entry name" value="Ribosomal_uS13-like_H2TH"/>
</dbReference>
<dbReference type="InterPro" id="IPR000214">
    <property type="entry name" value="Znf_DNA_glyclase/AP_lyase"/>
</dbReference>
<dbReference type="InterPro" id="IPR010663">
    <property type="entry name" value="Znf_FPG/IleRS"/>
</dbReference>
<dbReference type="NCBIfam" id="TIGR00577">
    <property type="entry name" value="fpg"/>
    <property type="match status" value="1"/>
</dbReference>
<dbReference type="NCBIfam" id="NF002211">
    <property type="entry name" value="PRK01103.1"/>
    <property type="match status" value="1"/>
</dbReference>
<dbReference type="PANTHER" id="PTHR22993">
    <property type="entry name" value="FORMAMIDOPYRIMIDINE-DNA GLYCOSYLASE"/>
    <property type="match status" value="1"/>
</dbReference>
<dbReference type="PANTHER" id="PTHR22993:SF9">
    <property type="entry name" value="FORMAMIDOPYRIMIDINE-DNA GLYCOSYLASE"/>
    <property type="match status" value="1"/>
</dbReference>
<dbReference type="Pfam" id="PF01149">
    <property type="entry name" value="Fapy_DNA_glyco"/>
    <property type="match status" value="1"/>
</dbReference>
<dbReference type="Pfam" id="PF06831">
    <property type="entry name" value="H2TH"/>
    <property type="match status" value="1"/>
</dbReference>
<dbReference type="Pfam" id="PF06827">
    <property type="entry name" value="zf-FPG_IleRS"/>
    <property type="match status" value="1"/>
</dbReference>
<dbReference type="SMART" id="SM00898">
    <property type="entry name" value="Fapy_DNA_glyco"/>
    <property type="match status" value="1"/>
</dbReference>
<dbReference type="SMART" id="SM01232">
    <property type="entry name" value="H2TH"/>
    <property type="match status" value="1"/>
</dbReference>
<dbReference type="SUPFAM" id="SSF57716">
    <property type="entry name" value="Glucocorticoid receptor-like (DNA-binding domain)"/>
    <property type="match status" value="1"/>
</dbReference>
<dbReference type="SUPFAM" id="SSF81624">
    <property type="entry name" value="N-terminal domain of MutM-like DNA repair proteins"/>
    <property type="match status" value="1"/>
</dbReference>
<dbReference type="SUPFAM" id="SSF46946">
    <property type="entry name" value="S13-like H2TH domain"/>
    <property type="match status" value="1"/>
</dbReference>
<dbReference type="PROSITE" id="PS51068">
    <property type="entry name" value="FPG_CAT"/>
    <property type="match status" value="1"/>
</dbReference>
<dbReference type="PROSITE" id="PS01242">
    <property type="entry name" value="ZF_FPG_1"/>
    <property type="match status" value="1"/>
</dbReference>
<dbReference type="PROSITE" id="PS51066">
    <property type="entry name" value="ZF_FPG_2"/>
    <property type="match status" value="1"/>
</dbReference>